<name>KPRS2_STRPN</name>
<organism>
    <name type="scientific">Streptococcus pneumoniae serotype 4 (strain ATCC BAA-334 / TIGR4)</name>
    <dbReference type="NCBI Taxonomy" id="170187"/>
    <lineage>
        <taxon>Bacteria</taxon>
        <taxon>Bacillati</taxon>
        <taxon>Bacillota</taxon>
        <taxon>Bacilli</taxon>
        <taxon>Lactobacillales</taxon>
        <taxon>Streptococcaceae</taxon>
        <taxon>Streptococcus</taxon>
    </lineage>
</organism>
<keyword id="KW-0067">ATP-binding</keyword>
<keyword id="KW-0963">Cytoplasm</keyword>
<keyword id="KW-0418">Kinase</keyword>
<keyword id="KW-0460">Magnesium</keyword>
<keyword id="KW-0479">Metal-binding</keyword>
<keyword id="KW-0545">Nucleotide biosynthesis</keyword>
<keyword id="KW-0547">Nucleotide-binding</keyword>
<keyword id="KW-1185">Reference proteome</keyword>
<keyword id="KW-0808">Transferase</keyword>
<evidence type="ECO:0000255" key="1">
    <source>
        <dbReference type="HAMAP-Rule" id="MF_00583"/>
    </source>
</evidence>
<comment type="function">
    <text evidence="1">Involved in the biosynthesis of the central metabolite phospho-alpha-D-ribosyl-1-pyrophosphate (PRPP) via the transfer of pyrophosphoryl group from ATP to 1-hydroxyl of ribose-5-phosphate (Rib-5-P).</text>
</comment>
<comment type="catalytic activity">
    <reaction evidence="1">
        <text>D-ribose 5-phosphate + ATP = 5-phospho-alpha-D-ribose 1-diphosphate + AMP + H(+)</text>
        <dbReference type="Rhea" id="RHEA:15609"/>
        <dbReference type="ChEBI" id="CHEBI:15378"/>
        <dbReference type="ChEBI" id="CHEBI:30616"/>
        <dbReference type="ChEBI" id="CHEBI:58017"/>
        <dbReference type="ChEBI" id="CHEBI:78346"/>
        <dbReference type="ChEBI" id="CHEBI:456215"/>
        <dbReference type="EC" id="2.7.6.1"/>
    </reaction>
</comment>
<comment type="cofactor">
    <cofactor evidence="1">
        <name>Mg(2+)</name>
        <dbReference type="ChEBI" id="CHEBI:18420"/>
    </cofactor>
    <text evidence="1">Binds 1 Mg(2+) ion per subunit.</text>
</comment>
<comment type="pathway">
    <text evidence="1">Metabolic intermediate biosynthesis; 5-phospho-alpha-D-ribose 1-diphosphate biosynthesis; 5-phospho-alpha-D-ribose 1-diphosphate from D-ribose 5-phosphate (route I): step 1/1.</text>
</comment>
<comment type="subunit">
    <text evidence="1">Homohexamer.</text>
</comment>
<comment type="subcellular location">
    <subcellularLocation>
        <location evidence="1">Cytoplasm</location>
    </subcellularLocation>
</comment>
<comment type="similarity">
    <text evidence="1">Belongs to the ribose-phosphate pyrophosphokinase family. Class I subfamily.</text>
</comment>
<comment type="caution">
    <text evidence="1">Part of a set of proteins in which some residues (ACT_SITE, NP_BIND, REGION and BINDING) are not conserved.</text>
</comment>
<proteinExistence type="inferred from homology"/>
<reference key="1">
    <citation type="journal article" date="2001" name="Science">
        <title>Complete genome sequence of a virulent isolate of Streptococcus pneumoniae.</title>
        <authorList>
            <person name="Tettelin H."/>
            <person name="Nelson K.E."/>
            <person name="Paulsen I.T."/>
            <person name="Eisen J.A."/>
            <person name="Read T.D."/>
            <person name="Peterson S.N."/>
            <person name="Heidelberg J.F."/>
            <person name="DeBoy R.T."/>
            <person name="Haft D.H."/>
            <person name="Dodson R.J."/>
            <person name="Durkin A.S."/>
            <person name="Gwinn M.L."/>
            <person name="Kolonay J.F."/>
            <person name="Nelson W.C."/>
            <person name="Peterson J.D."/>
            <person name="Umayam L.A."/>
            <person name="White O."/>
            <person name="Salzberg S.L."/>
            <person name="Lewis M.R."/>
            <person name="Radune D."/>
            <person name="Holtzapple E.K."/>
            <person name="Khouri H.M."/>
            <person name="Wolf A.M."/>
            <person name="Utterback T.R."/>
            <person name="Hansen C.L."/>
            <person name="McDonald L.A."/>
            <person name="Feldblyum T.V."/>
            <person name="Angiuoli S.V."/>
            <person name="Dickinson T."/>
            <person name="Hickey E.K."/>
            <person name="Holt I.E."/>
            <person name="Loftus B.J."/>
            <person name="Yang F."/>
            <person name="Smith H.O."/>
            <person name="Venter J.C."/>
            <person name="Dougherty B.A."/>
            <person name="Morrison D.A."/>
            <person name="Hollingshead S.K."/>
            <person name="Fraser C.M."/>
        </authorList>
    </citation>
    <scope>NUCLEOTIDE SEQUENCE [LARGE SCALE GENOMIC DNA]</scope>
    <source>
        <strain>ATCC BAA-334 / TIGR4</strain>
    </source>
</reference>
<gene>
    <name evidence="1" type="primary">prs2</name>
    <name type="synonym">prs</name>
    <name type="ordered locus">SP_1095</name>
</gene>
<accession>P65241</accession>
<accession>Q97QV3</accession>
<sequence length="319" mass="35125">MSDRKNMKLFALNSNQEIAQKIAQAVGVPLGKLSSRQFSDGEIQVNIEESVRGYDVYIIQSTSFPVNNHLMELLIMVDACVRASAHSINVVLPYFGYARQDRIACPREPLTAKLVANMLVKAGVDRILTLDLHAVQVQGFFDIPVDNLFTVPLFAKHYCDKGLLGSDVVVVSPKNSGVKRARSLAEYLDAPIAIIDYPQDDATRNEGYIIGDVEGKKAILIDDILNTGRTFSEASKIVEREGATEIYAVSSHGLFVEGAAELLDNTNIKEILVTDSVATKEKTPKNVCYITASELIGDAIVRIHERKPVSPLFAYNKKK</sequence>
<protein>
    <recommendedName>
        <fullName evidence="1">Putative ribose-phosphate pyrophosphokinase 2</fullName>
        <shortName evidence="1">RPPK 2</shortName>
        <ecNumber evidence="1">2.7.6.1</ecNumber>
    </recommendedName>
    <alternativeName>
        <fullName evidence="1">5-phospho-D-ribosyl alpha-1-diphosphate synthase 2</fullName>
    </alternativeName>
    <alternativeName>
        <fullName evidence="1">Phosphoribosyl diphosphate synthase 2</fullName>
    </alternativeName>
    <alternativeName>
        <fullName evidence="1">Phosphoribosyl pyrophosphate synthase 2</fullName>
        <shortName evidence="1">P-Rib-PP synthase 2</shortName>
        <shortName evidence="1">PRPP synthase 2</shortName>
        <shortName evidence="1">PRPPase 2</shortName>
    </alternativeName>
</protein>
<dbReference type="EC" id="2.7.6.1" evidence="1"/>
<dbReference type="EMBL" id="AE005672">
    <property type="protein sequence ID" value="AAK75207.1"/>
    <property type="molecule type" value="Genomic_DNA"/>
</dbReference>
<dbReference type="PIR" id="F95126">
    <property type="entry name" value="F95126"/>
</dbReference>
<dbReference type="RefSeq" id="WP_001283813.1">
    <property type="nucleotide sequence ID" value="NZ_CP155539.1"/>
</dbReference>
<dbReference type="SMR" id="P65241"/>
<dbReference type="PaxDb" id="170187-SP_1095"/>
<dbReference type="EnsemblBacteria" id="AAK75207">
    <property type="protein sequence ID" value="AAK75207"/>
    <property type="gene ID" value="SP_1095"/>
</dbReference>
<dbReference type="KEGG" id="spn:SP_1095"/>
<dbReference type="eggNOG" id="COG0462">
    <property type="taxonomic scope" value="Bacteria"/>
</dbReference>
<dbReference type="PhylomeDB" id="P65241"/>
<dbReference type="BioCyc" id="SPNE170187:G1FZB-1123-MONOMER"/>
<dbReference type="UniPathway" id="UPA00087">
    <property type="reaction ID" value="UER00172"/>
</dbReference>
<dbReference type="Proteomes" id="UP000000585">
    <property type="component" value="Chromosome"/>
</dbReference>
<dbReference type="GO" id="GO:0005737">
    <property type="term" value="C:cytoplasm"/>
    <property type="evidence" value="ECO:0007669"/>
    <property type="project" value="UniProtKB-SubCell"/>
</dbReference>
<dbReference type="GO" id="GO:0002189">
    <property type="term" value="C:ribose phosphate diphosphokinase complex"/>
    <property type="evidence" value="ECO:0007669"/>
    <property type="project" value="TreeGrafter"/>
</dbReference>
<dbReference type="GO" id="GO:0005524">
    <property type="term" value="F:ATP binding"/>
    <property type="evidence" value="ECO:0007669"/>
    <property type="project" value="UniProtKB-KW"/>
</dbReference>
<dbReference type="GO" id="GO:0016301">
    <property type="term" value="F:kinase activity"/>
    <property type="evidence" value="ECO:0007669"/>
    <property type="project" value="UniProtKB-KW"/>
</dbReference>
<dbReference type="GO" id="GO:0000287">
    <property type="term" value="F:magnesium ion binding"/>
    <property type="evidence" value="ECO:0007669"/>
    <property type="project" value="UniProtKB-UniRule"/>
</dbReference>
<dbReference type="GO" id="GO:0004749">
    <property type="term" value="F:ribose phosphate diphosphokinase activity"/>
    <property type="evidence" value="ECO:0007669"/>
    <property type="project" value="UniProtKB-UniRule"/>
</dbReference>
<dbReference type="GO" id="GO:0006015">
    <property type="term" value="P:5-phosphoribose 1-diphosphate biosynthetic process"/>
    <property type="evidence" value="ECO:0007669"/>
    <property type="project" value="UniProtKB-UniRule"/>
</dbReference>
<dbReference type="GO" id="GO:0006164">
    <property type="term" value="P:purine nucleotide biosynthetic process"/>
    <property type="evidence" value="ECO:0007669"/>
    <property type="project" value="TreeGrafter"/>
</dbReference>
<dbReference type="GO" id="GO:0009156">
    <property type="term" value="P:ribonucleoside monophosphate biosynthetic process"/>
    <property type="evidence" value="ECO:0007669"/>
    <property type="project" value="InterPro"/>
</dbReference>
<dbReference type="CDD" id="cd06223">
    <property type="entry name" value="PRTases_typeI"/>
    <property type="match status" value="1"/>
</dbReference>
<dbReference type="FunFam" id="3.40.50.2020:FF:000042">
    <property type="entry name" value="Putative ribose-phosphate pyrophosphokinase"/>
    <property type="match status" value="1"/>
</dbReference>
<dbReference type="FunFam" id="3.40.50.2020:FF:000001">
    <property type="entry name" value="Ribose-phosphate pyrophosphokinase"/>
    <property type="match status" value="1"/>
</dbReference>
<dbReference type="Gene3D" id="3.40.50.2020">
    <property type="match status" value="2"/>
</dbReference>
<dbReference type="HAMAP" id="MF_00583_B">
    <property type="entry name" value="RibP_PPkinase_B"/>
    <property type="match status" value="1"/>
</dbReference>
<dbReference type="InterPro" id="IPR000842">
    <property type="entry name" value="PRib_PP_synth_CS"/>
</dbReference>
<dbReference type="InterPro" id="IPR029099">
    <property type="entry name" value="Pribosyltran_N"/>
</dbReference>
<dbReference type="InterPro" id="IPR000836">
    <property type="entry name" value="PRibTrfase_dom"/>
</dbReference>
<dbReference type="InterPro" id="IPR029057">
    <property type="entry name" value="PRTase-like"/>
</dbReference>
<dbReference type="InterPro" id="IPR005946">
    <property type="entry name" value="Rib-P_diPkinase"/>
</dbReference>
<dbReference type="InterPro" id="IPR037515">
    <property type="entry name" value="Rib-P_diPkinase_bac"/>
</dbReference>
<dbReference type="NCBIfam" id="NF002320">
    <property type="entry name" value="PRK01259.1"/>
    <property type="match status" value="1"/>
</dbReference>
<dbReference type="NCBIfam" id="NF002686">
    <property type="entry name" value="PRK02458.1"/>
    <property type="match status" value="1"/>
</dbReference>
<dbReference type="NCBIfam" id="TIGR01251">
    <property type="entry name" value="ribP_PPkin"/>
    <property type="match status" value="1"/>
</dbReference>
<dbReference type="PANTHER" id="PTHR10210">
    <property type="entry name" value="RIBOSE-PHOSPHATE DIPHOSPHOKINASE FAMILY MEMBER"/>
    <property type="match status" value="1"/>
</dbReference>
<dbReference type="PANTHER" id="PTHR10210:SF41">
    <property type="entry name" value="RIBOSE-PHOSPHATE PYROPHOSPHOKINASE 1, CHLOROPLASTIC"/>
    <property type="match status" value="1"/>
</dbReference>
<dbReference type="Pfam" id="PF14572">
    <property type="entry name" value="Pribosyl_synth"/>
    <property type="match status" value="1"/>
</dbReference>
<dbReference type="Pfam" id="PF13793">
    <property type="entry name" value="Pribosyltran_N"/>
    <property type="match status" value="1"/>
</dbReference>
<dbReference type="SMART" id="SM01400">
    <property type="entry name" value="Pribosyltran_N"/>
    <property type="match status" value="1"/>
</dbReference>
<dbReference type="SUPFAM" id="SSF53271">
    <property type="entry name" value="PRTase-like"/>
    <property type="match status" value="2"/>
</dbReference>
<dbReference type="PROSITE" id="PS00114">
    <property type="entry name" value="PRPP_SYNTHASE"/>
    <property type="match status" value="1"/>
</dbReference>
<feature type="chain" id="PRO_0000141206" description="Putative ribose-phosphate pyrophosphokinase 2">
    <location>
        <begin position="1"/>
        <end position="319"/>
    </location>
</feature>
<feature type="binding site" evidence="1">
    <location>
        <begin position="40"/>
        <end position="42"/>
    </location>
    <ligand>
        <name>ATP</name>
        <dbReference type="ChEBI" id="CHEBI:30616"/>
    </ligand>
</feature>
<feature type="binding site" evidence="1">
    <location>
        <begin position="99"/>
        <end position="100"/>
    </location>
    <ligand>
        <name>ATP</name>
        <dbReference type="ChEBI" id="CHEBI:30616"/>
    </ligand>
</feature>
<feature type="binding site" evidence="1">
    <location>
        <position position="133"/>
    </location>
    <ligand>
        <name>Mg(2+)</name>
        <dbReference type="ChEBI" id="CHEBI:18420"/>
    </ligand>
</feature>
<feature type="binding site" evidence="1">
    <location>
        <position position="222"/>
    </location>
    <ligand>
        <name>D-ribose 5-phosphate</name>
        <dbReference type="ChEBI" id="CHEBI:78346"/>
    </ligand>
</feature>
<feature type="binding site" evidence="1">
    <location>
        <begin position="226"/>
        <end position="230"/>
    </location>
    <ligand>
        <name>D-ribose 5-phosphate</name>
        <dbReference type="ChEBI" id="CHEBI:78346"/>
    </ligand>
</feature>